<feature type="chain" id="PRO_0000170151" description="Large ribosomal subunit protein bL33">
    <location>
        <begin position="1"/>
        <end position="52"/>
    </location>
</feature>
<comment type="similarity">
    <text evidence="1">Belongs to the bacterial ribosomal protein bL33 family.</text>
</comment>
<name>RL33_CHLPN</name>
<organism>
    <name type="scientific">Chlamydia pneumoniae</name>
    <name type="common">Chlamydophila pneumoniae</name>
    <dbReference type="NCBI Taxonomy" id="83558"/>
    <lineage>
        <taxon>Bacteria</taxon>
        <taxon>Pseudomonadati</taxon>
        <taxon>Chlamydiota</taxon>
        <taxon>Chlamydiia</taxon>
        <taxon>Chlamydiales</taxon>
        <taxon>Chlamydiaceae</taxon>
        <taxon>Chlamydia/Chlamydophila group</taxon>
        <taxon>Chlamydia</taxon>
    </lineage>
</organism>
<dbReference type="EMBL" id="AE001363">
    <property type="protein sequence ID" value="AAD18403.1"/>
    <property type="molecule type" value="Genomic_DNA"/>
</dbReference>
<dbReference type="EMBL" id="AE002161">
    <property type="protein sequence ID" value="AAF38339.1"/>
    <property type="molecule type" value="Genomic_DNA"/>
</dbReference>
<dbReference type="EMBL" id="BA000008">
    <property type="protein sequence ID" value="BAA98460.1"/>
    <property type="molecule type" value="Genomic_DNA"/>
</dbReference>
<dbReference type="EMBL" id="AE009440">
    <property type="protein sequence ID" value="AAP98190.1"/>
    <property type="molecule type" value="Genomic_DNA"/>
</dbReference>
<dbReference type="PIR" id="B86522">
    <property type="entry name" value="B86522"/>
</dbReference>
<dbReference type="PIR" id="F72101">
    <property type="entry name" value="F72101"/>
</dbReference>
<dbReference type="RefSeq" id="NP_224459.1">
    <property type="nucleotide sequence ID" value="NC_000922.1"/>
</dbReference>
<dbReference type="RefSeq" id="WP_010882902.1">
    <property type="nucleotide sequence ID" value="NZ_LN847257.1"/>
</dbReference>
<dbReference type="SMR" id="Q9Z8T4"/>
<dbReference type="STRING" id="406984.CPK_ORF00761"/>
<dbReference type="GeneID" id="45050297"/>
<dbReference type="KEGG" id="cpa:CP_0511"/>
<dbReference type="KEGG" id="cpj:rl33"/>
<dbReference type="KEGG" id="cpn:CPn_0250"/>
<dbReference type="KEGG" id="cpt:CpB0257"/>
<dbReference type="PATRIC" id="fig|115713.3.peg.282"/>
<dbReference type="eggNOG" id="COG0267">
    <property type="taxonomic scope" value="Bacteria"/>
</dbReference>
<dbReference type="HOGENOM" id="CLU_190949_1_1_0"/>
<dbReference type="OrthoDB" id="21586at2"/>
<dbReference type="Proteomes" id="UP000000583">
    <property type="component" value="Chromosome"/>
</dbReference>
<dbReference type="Proteomes" id="UP000000801">
    <property type="component" value="Chromosome"/>
</dbReference>
<dbReference type="GO" id="GO:0022625">
    <property type="term" value="C:cytosolic large ribosomal subunit"/>
    <property type="evidence" value="ECO:0007669"/>
    <property type="project" value="TreeGrafter"/>
</dbReference>
<dbReference type="GO" id="GO:0003735">
    <property type="term" value="F:structural constituent of ribosome"/>
    <property type="evidence" value="ECO:0007669"/>
    <property type="project" value="InterPro"/>
</dbReference>
<dbReference type="GO" id="GO:0006412">
    <property type="term" value="P:translation"/>
    <property type="evidence" value="ECO:0007669"/>
    <property type="project" value="UniProtKB-UniRule"/>
</dbReference>
<dbReference type="FunFam" id="2.20.28.120:FF:000009">
    <property type="entry name" value="50S ribosomal protein L33"/>
    <property type="match status" value="1"/>
</dbReference>
<dbReference type="Gene3D" id="2.20.28.120">
    <property type="entry name" value="Ribosomal protein L33"/>
    <property type="match status" value="1"/>
</dbReference>
<dbReference type="HAMAP" id="MF_00294">
    <property type="entry name" value="Ribosomal_bL33"/>
    <property type="match status" value="1"/>
</dbReference>
<dbReference type="InterPro" id="IPR001705">
    <property type="entry name" value="Ribosomal_bL33"/>
</dbReference>
<dbReference type="InterPro" id="IPR018264">
    <property type="entry name" value="Ribosomal_bL33_CS"/>
</dbReference>
<dbReference type="InterPro" id="IPR038584">
    <property type="entry name" value="Ribosomal_bL33_sf"/>
</dbReference>
<dbReference type="InterPro" id="IPR011332">
    <property type="entry name" value="Ribosomal_zn-bd"/>
</dbReference>
<dbReference type="NCBIfam" id="NF001860">
    <property type="entry name" value="PRK00595.1"/>
    <property type="match status" value="1"/>
</dbReference>
<dbReference type="NCBIfam" id="TIGR01023">
    <property type="entry name" value="rpmG_bact"/>
    <property type="match status" value="1"/>
</dbReference>
<dbReference type="PANTHER" id="PTHR15238">
    <property type="entry name" value="54S RIBOSOMAL PROTEIN L39, MITOCHONDRIAL"/>
    <property type="match status" value="1"/>
</dbReference>
<dbReference type="PANTHER" id="PTHR15238:SF1">
    <property type="entry name" value="LARGE RIBOSOMAL SUBUNIT PROTEIN BL33M"/>
    <property type="match status" value="1"/>
</dbReference>
<dbReference type="Pfam" id="PF00471">
    <property type="entry name" value="Ribosomal_L33"/>
    <property type="match status" value="1"/>
</dbReference>
<dbReference type="SUPFAM" id="SSF57829">
    <property type="entry name" value="Zn-binding ribosomal proteins"/>
    <property type="match status" value="1"/>
</dbReference>
<dbReference type="PROSITE" id="PS00582">
    <property type="entry name" value="RIBOSOMAL_L33"/>
    <property type="match status" value="1"/>
</dbReference>
<proteinExistence type="inferred from homology"/>
<protein>
    <recommendedName>
        <fullName evidence="1">Large ribosomal subunit protein bL33</fullName>
    </recommendedName>
    <alternativeName>
        <fullName>50S ribosomal protein L33</fullName>
    </alternativeName>
</protein>
<keyword id="KW-0687">Ribonucleoprotein</keyword>
<keyword id="KW-0689">Ribosomal protein</keyword>
<accession>Q9Z8T4</accession>
<accession>Q9JQ40</accession>
<reference key="1">
    <citation type="journal article" date="1999" name="Nat. Genet.">
        <title>Comparative genomes of Chlamydia pneumoniae and C. trachomatis.</title>
        <authorList>
            <person name="Kalman S."/>
            <person name="Mitchell W.P."/>
            <person name="Marathe R."/>
            <person name="Lammel C.J."/>
            <person name="Fan J."/>
            <person name="Hyman R.W."/>
            <person name="Olinger L."/>
            <person name="Grimwood J."/>
            <person name="Davis R.W."/>
            <person name="Stephens R.S."/>
        </authorList>
    </citation>
    <scope>NUCLEOTIDE SEQUENCE [LARGE SCALE GENOMIC DNA]</scope>
    <source>
        <strain>CWL029</strain>
    </source>
</reference>
<reference key="2">
    <citation type="journal article" date="2000" name="Nucleic Acids Res.">
        <title>Genome sequences of Chlamydia trachomatis MoPn and Chlamydia pneumoniae AR39.</title>
        <authorList>
            <person name="Read T.D."/>
            <person name="Brunham R.C."/>
            <person name="Shen C."/>
            <person name="Gill S.R."/>
            <person name="Heidelberg J.F."/>
            <person name="White O."/>
            <person name="Hickey E.K."/>
            <person name="Peterson J.D."/>
            <person name="Utterback T.R."/>
            <person name="Berry K.J."/>
            <person name="Bass S."/>
            <person name="Linher K.D."/>
            <person name="Weidman J.F."/>
            <person name="Khouri H.M."/>
            <person name="Craven B."/>
            <person name="Bowman C."/>
            <person name="Dodson R.J."/>
            <person name="Gwinn M.L."/>
            <person name="Nelson W.C."/>
            <person name="DeBoy R.T."/>
            <person name="Kolonay J.F."/>
            <person name="McClarty G."/>
            <person name="Salzberg S.L."/>
            <person name="Eisen J.A."/>
            <person name="Fraser C.M."/>
        </authorList>
    </citation>
    <scope>NUCLEOTIDE SEQUENCE [LARGE SCALE GENOMIC DNA]</scope>
    <source>
        <strain>AR39</strain>
    </source>
</reference>
<reference key="3">
    <citation type="journal article" date="2000" name="Nucleic Acids Res.">
        <title>Comparison of whole genome sequences of Chlamydia pneumoniae J138 from Japan and CWL029 from USA.</title>
        <authorList>
            <person name="Shirai M."/>
            <person name="Hirakawa H."/>
            <person name="Kimoto M."/>
            <person name="Tabuchi M."/>
            <person name="Kishi F."/>
            <person name="Ouchi K."/>
            <person name="Shiba T."/>
            <person name="Ishii K."/>
            <person name="Hattori M."/>
            <person name="Kuhara S."/>
            <person name="Nakazawa T."/>
        </authorList>
    </citation>
    <scope>NUCLEOTIDE SEQUENCE [LARGE SCALE GENOMIC DNA]</scope>
    <source>
        <strain>J138</strain>
    </source>
</reference>
<reference key="4">
    <citation type="submission" date="2002-05" db="EMBL/GenBank/DDBJ databases">
        <title>The genome sequence of Chlamydia pneumoniae TW183 and comparison with other Chlamydia strains based on whole genome sequence analysis.</title>
        <authorList>
            <person name="Geng M.M."/>
            <person name="Schuhmacher A."/>
            <person name="Muehldorfer I."/>
            <person name="Bensch K.W."/>
            <person name="Schaefer K.P."/>
            <person name="Schneider S."/>
            <person name="Pohl T."/>
            <person name="Essig A."/>
            <person name="Marre R."/>
            <person name="Melchers K."/>
        </authorList>
    </citation>
    <scope>NUCLEOTIDE SEQUENCE [LARGE SCALE GENOMIC DNA]</scope>
    <source>
        <strain>TW-183</strain>
    </source>
</reference>
<evidence type="ECO:0000305" key="1"/>
<gene>
    <name type="primary">rpmG</name>
    <name type="synonym">rl33</name>
    <name type="ordered locus">CPn_0250</name>
    <name type="ordered locus">CP_0511</name>
    <name type="ordered locus">CpB0257</name>
</gene>
<sequence>MASKNREIIKLKSSESSDMYWTVKNKRKTTGRLELKKYDRKLRRHVIFKEAR</sequence>